<gene>
    <name evidence="10" type="primary">GPR155</name>
    <name evidence="5" type="synonym">PGR22</name>
</gene>
<sequence>MNSNLPAENLTIAVNMTKTLPTAVTHGFNSTNDPPSMSITRLFPALLECFGIVLCGYIAGRANVITSTQAKGLGNFVSRFALPALLFKNMVVLNFSNVDWSFLYSILIAKASVFFIVCVLTLLVASPDSRFSKAGLFPIFATQSNDFALGYPIVEALYQTTYPEYLQYIYLVAPISLMMLNPIGFIFCEIQKWKDTQNASQNKIKIVGLGLLRVLQNPIVFMVFIGIAFNFILDRKVPVYVENFLDGLGNSFSGSALFYLGLTMVGKIKRLKKSAFVVLILLITAKLLVLPLLCREMVELLDKGDSVVNHTSLSNYAFLYGVFPVAPGVAIFATQFNMEVEIITSGMVISTFVSAPIMYVSAWLLTFPTMDPKPLAYAIQNVSFDISIVSLISLIWSLAILLLSKKYKQLPHMLTTNLLIAQSIVCAGMMIWNFVKEKNFVGQILVFVLLYSSLYSTYLWTGLLAISLFLLKKRERVQIPVGIIIISGWGIPALLVGVLLITGKHNGDSIDSAFFYGKEQMITTAVTLFCSILIAGISLMCMNQTAQAGSYEGFDQSQSHKVVEPGNTAFEESPAPVNEPELFTSSIPETSCCSCSMGNGELHCPSIEPIANTSTSEPVIPSFEKNNHCVSRCNSQSCILAQEEEQYLQSGDQQLTRHVLLCLLLIIGLFANLSSCLWWLFNQEPGRLYVELQFFCAVFNFGQGFISFGIFGLDKHLIILPFKRRLEFLWNNKDTAENRDSPVSEEIKMTCQQFIHYHRDLCIRNIVKERRCGAKTSAGTFCGCDLVSWLIEVGLASDRGEAVIYGDRLVQGGVIQHITNEYEFRDEYLFYRFLQKSPEQSPPAINANTLQQERYKEIEHSSPPSHSPKT</sequence>
<keyword id="KW-0002">3D-structure</keyword>
<keyword id="KW-0325">Glycoprotein</keyword>
<keyword id="KW-0446">Lipid-binding</keyword>
<keyword id="KW-0458">Lysosome</keyword>
<keyword id="KW-0472">Membrane</keyword>
<keyword id="KW-1267">Proteomics identification</keyword>
<keyword id="KW-1185">Reference proteome</keyword>
<keyword id="KW-0812">Transmembrane</keyword>
<keyword id="KW-1133">Transmembrane helix</keyword>
<evidence type="ECO:0000255" key="1"/>
<evidence type="ECO:0000255" key="2">
    <source>
        <dbReference type="PROSITE-ProRule" id="PRU00066"/>
    </source>
</evidence>
<evidence type="ECO:0000269" key="3">
    <source>
    </source>
</evidence>
<evidence type="ECO:0000269" key="4">
    <source>
    </source>
</evidence>
<evidence type="ECO:0000303" key="5">
    <source>
    </source>
</evidence>
<evidence type="ECO:0000303" key="6">
    <source>
    </source>
</evidence>
<evidence type="ECO:0000303" key="7">
    <source>
    </source>
</evidence>
<evidence type="ECO:0000305" key="8"/>
<evidence type="ECO:0000305" key="9">
    <source>
    </source>
</evidence>
<evidence type="ECO:0000312" key="10">
    <source>
        <dbReference type="HGNC" id="HGNC:22951"/>
    </source>
</evidence>
<evidence type="ECO:0007744" key="11">
    <source>
        <dbReference type="PDB" id="8U54"/>
    </source>
</evidence>
<evidence type="ECO:0007744" key="12">
    <source>
        <dbReference type="PDB" id="8U56"/>
    </source>
</evidence>
<evidence type="ECO:0007744" key="13">
    <source>
        <dbReference type="PDB" id="8U58"/>
    </source>
</evidence>
<evidence type="ECO:0007744" key="14">
    <source>
        <dbReference type="PDB" id="8U5C"/>
    </source>
</evidence>
<evidence type="ECO:0007744" key="15">
    <source>
        <dbReference type="PDB" id="8U5N"/>
    </source>
</evidence>
<evidence type="ECO:0007744" key="16">
    <source>
        <dbReference type="PDB" id="8U5Q"/>
    </source>
</evidence>
<evidence type="ECO:0007744" key="17">
    <source>
        <dbReference type="PDB" id="8U5V"/>
    </source>
</evidence>
<evidence type="ECO:0007744" key="18">
    <source>
        <dbReference type="PDB" id="8U5X"/>
    </source>
</evidence>
<evidence type="ECO:0007829" key="19">
    <source>
        <dbReference type="PDB" id="8U54"/>
    </source>
</evidence>
<evidence type="ECO:0007829" key="20">
    <source>
        <dbReference type="PDB" id="8U58"/>
    </source>
</evidence>
<evidence type="ECO:0007829" key="21">
    <source>
        <dbReference type="PDB" id="8U5C"/>
    </source>
</evidence>
<evidence type="ECO:0007829" key="22">
    <source>
        <dbReference type="PDB" id="8U5Q"/>
    </source>
</evidence>
<proteinExistence type="evidence at protein level"/>
<name>LYCHS_HUMAN</name>
<organism>
    <name type="scientific">Homo sapiens</name>
    <name type="common">Human</name>
    <dbReference type="NCBI Taxonomy" id="9606"/>
    <lineage>
        <taxon>Eukaryota</taxon>
        <taxon>Metazoa</taxon>
        <taxon>Chordata</taxon>
        <taxon>Craniata</taxon>
        <taxon>Vertebrata</taxon>
        <taxon>Euteleostomi</taxon>
        <taxon>Mammalia</taxon>
        <taxon>Eutheria</taxon>
        <taxon>Euarchontoglires</taxon>
        <taxon>Primates</taxon>
        <taxon>Haplorrhini</taxon>
        <taxon>Catarrhini</taxon>
        <taxon>Hominidae</taxon>
        <taxon>Homo</taxon>
    </lineage>
</organism>
<protein>
    <recommendedName>
        <fullName evidence="6 7">Lysosomal cholesterol signaling protein</fullName>
        <shortName evidence="6">LYCHOS</shortName>
    </recommendedName>
    <alternativeName>
        <fullName evidence="5">G-protein coupled receptor PGR22</fullName>
    </alternativeName>
</protein>
<accession>Q7Z3F1</accession>
<accession>B2RCI2</accession>
<accession>D3DPE2</accession>
<accession>Q4G0Y6</accession>
<accession>Q53SJ3</accession>
<accession>Q53TA8</accession>
<accession>Q69YG8</accession>
<accession>Q86SP9</accession>
<accession>Q8N261</accession>
<accession>Q8N639</accession>
<accession>Q8N8K3</accession>
<accession>Q96MV6</accession>
<feature type="chain" id="PRO_0000087551" description="Lysosomal cholesterol signaling protein">
    <location>
        <begin position="1"/>
        <end position="870"/>
    </location>
</feature>
<feature type="topological domain" description="Lumenal" evidence="4 11 12 13 14 15 16 17 18">
    <location>
        <begin position="1"/>
        <end position="38"/>
    </location>
</feature>
<feature type="transmembrane region" description="Helical; Name=1" evidence="4 11 12 13 14 15 16 17 18">
    <location>
        <begin position="39"/>
        <end position="59"/>
    </location>
</feature>
<feature type="topological domain" description="Cytoplasmic" evidence="4 11 12 13 14 15 16 17 18">
    <location>
        <begin position="60"/>
        <end position="79"/>
    </location>
</feature>
<feature type="transmembrane region" description="Helical; Name=2" evidence="4 11 12 13 14 15 16 17 18">
    <location>
        <begin position="80"/>
        <end position="100"/>
    </location>
</feature>
<feature type="topological domain" description="Lumenal" evidence="4 11 12 13 14 15 16 17 18">
    <location>
        <begin position="101"/>
        <end position="104"/>
    </location>
</feature>
<feature type="transmembrane region" description="Helical; Name=3" evidence="4 11 12 13 14 15 16 17 18">
    <location>
        <begin position="105"/>
        <end position="125"/>
    </location>
</feature>
<feature type="topological domain" description="Cytoplasmic" evidence="4 11 12 13 14 15 16 17 18">
    <location>
        <begin position="126"/>
        <end position="133"/>
    </location>
</feature>
<feature type="transmembrane region" description="Discontinuously helical; Name=4" evidence="4 11 12 13 14 15 16 17 18">
    <location>
        <begin position="134"/>
        <end position="154"/>
    </location>
</feature>
<feature type="topological domain" description="Lumenal" evidence="4 11 12 13 14 15 16 17 18">
    <location>
        <begin position="155"/>
        <end position="167"/>
    </location>
</feature>
<feature type="transmembrane region" description="Helical; Name=5" evidence="4 11 12 13 14 15 16 17 18">
    <location>
        <begin position="168"/>
        <end position="188"/>
    </location>
</feature>
<feature type="topological domain" description="Cytoplasmic" evidence="4 11 12 13 14 15 16 17 18">
    <location>
        <begin position="189"/>
        <end position="213"/>
    </location>
</feature>
<feature type="transmembrane region" description="Discontinuously helical; Name=6" evidence="4 11 12 13 14 15 16 17 18">
    <location>
        <begin position="214"/>
        <end position="234"/>
    </location>
</feature>
<feature type="topological domain" description="Lumenal" evidence="4 11 12 13 14 15 16 17 18">
    <location>
        <begin position="235"/>
        <end position="243"/>
    </location>
</feature>
<feature type="transmembrane region" description="Discontinuously helical; Name=7" evidence="4 11 12 13 14 15 16 17 18">
    <location>
        <begin position="244"/>
        <end position="264"/>
    </location>
</feature>
<feature type="topological domain" description="Cytoplasmic" evidence="4 11 12 13 14 15 16 17 18">
    <location>
        <begin position="265"/>
        <end position="273"/>
    </location>
</feature>
<feature type="transmembrane region" description="Helical; Name=8" evidence="4 11 12 13 14 15 16 17 18">
    <location>
        <begin position="274"/>
        <end position="294"/>
    </location>
</feature>
<feature type="topological domain" description="Lumenal" evidence="4 11 12 13 14 15 16 17 18">
    <location>
        <begin position="295"/>
        <end position="315"/>
    </location>
</feature>
<feature type="transmembrane region" description="Discontinuously helical; Name=9" evidence="4 11 12 13 14 15 16 17 18">
    <location>
        <begin position="316"/>
        <end position="336"/>
    </location>
</feature>
<feature type="topological domain" description="Cytoplasmic" evidence="4 11 12 13 14 15 16 17 18">
    <location>
        <begin position="337"/>
        <end position="346"/>
    </location>
</feature>
<feature type="transmembrane region" description="Helical; Name=10" evidence="4 11 12 13 14 15 16 17 18">
    <location>
        <begin position="347"/>
        <end position="367"/>
    </location>
</feature>
<feature type="topological domain" description="Lumenal" evidence="4 11 12 13 14 15 16 17 18">
    <location>
        <begin position="368"/>
        <end position="381"/>
    </location>
</feature>
<feature type="transmembrane region" description="Helical; Name=11" evidence="4 11 12 13 14 15 16 17 18">
    <location>
        <begin position="382"/>
        <end position="402"/>
    </location>
</feature>
<feature type="topological domain" description="Cytoplasmic" evidence="4 11 12 13 14 15 16 17 18">
    <location>
        <begin position="403"/>
        <end position="414"/>
    </location>
</feature>
<feature type="transmembrane region" description="Helical; Name=12" evidence="4 11 12 13 14 15 16 17 18">
    <location>
        <begin position="415"/>
        <end position="435"/>
    </location>
</feature>
<feature type="topological domain" description="Lumenal" evidence="4 11 12 13 14 15 16 17 18">
    <location>
        <begin position="436"/>
        <end position="438"/>
    </location>
</feature>
<feature type="transmembrane region" description="Helical; Name=13" evidence="4 11 12 13 14 15 16 17 18">
    <location>
        <begin position="439"/>
        <end position="459"/>
    </location>
</feature>
<feature type="topological domain" description="Cytoplasmic" evidence="4 11 12 13 14 15 16 17 18">
    <location>
        <begin position="460"/>
        <end position="480"/>
    </location>
</feature>
<feature type="transmembrane region" description="Helical; Name=14" evidence="4 11 12 13 14 15 16 17 18">
    <location>
        <begin position="481"/>
        <end position="501"/>
    </location>
</feature>
<feature type="topological domain" description="Lumenal" evidence="4 11 12 13 14 15 16 17 18">
    <location>
        <begin position="502"/>
        <end position="520"/>
    </location>
</feature>
<feature type="transmembrane region" description="Helical; Name=15" evidence="4 11 12 13 14 15 16 17 18">
    <location>
        <begin position="521"/>
        <end position="541"/>
    </location>
</feature>
<feature type="topological domain" description="Cytoplasmic" evidence="4 11 12 13 14 15 16 17 18">
    <location>
        <begin position="542"/>
        <end position="660"/>
    </location>
</feature>
<feature type="transmembrane region" description="Helical; Name=16" evidence="4 11 12 13 14 15 16 17 18">
    <location>
        <begin position="661"/>
        <end position="681"/>
    </location>
</feature>
<feature type="topological domain" description="Lumenal" evidence="4 11 12 13 14 15 16 17 18">
    <location>
        <begin position="682"/>
        <end position="691"/>
    </location>
</feature>
<feature type="transmembrane region" description="Helical; Name=17" evidence="4 11 12 13 14 15 16 17 18">
    <location>
        <begin position="692"/>
        <end position="712"/>
    </location>
</feature>
<feature type="topological domain" description="Cytoplasmic" evidence="4 11 12 13 14 15 16 17 18">
    <location>
        <begin position="713"/>
        <end position="870"/>
    </location>
</feature>
<feature type="domain" description="DEP" evidence="2">
    <location>
        <begin position="757"/>
        <end position="835"/>
    </location>
</feature>
<feature type="region of interest" description="PIN-like transporter" evidence="4 11 12 13 14 15 16 17 18">
    <location>
        <begin position="1"/>
        <end position="370"/>
    </location>
</feature>
<feature type="region of interest" description="GPCR" evidence="4 11 12 13 14 15 16 17 18">
    <location>
        <begin position="380"/>
        <end position="717"/>
    </location>
</feature>
<feature type="binding site" evidence="9">
    <location>
        <position position="43"/>
    </location>
    <ligand>
        <name>cholesterol</name>
        <dbReference type="ChEBI" id="CHEBI:16113"/>
    </ligand>
</feature>
<feature type="binding site" evidence="4 9 14">
    <location>
        <position position="57"/>
    </location>
    <ligand>
        <name>cholesterol</name>
        <dbReference type="ChEBI" id="CHEBI:16113"/>
    </ligand>
</feature>
<feature type="binding site" evidence="4 14">
    <location>
        <position position="266"/>
    </location>
    <ligand>
        <name>cholesterol</name>
        <dbReference type="ChEBI" id="CHEBI:16113"/>
    </ligand>
</feature>
<feature type="binding site" evidence="4 14">
    <location>
        <position position="267"/>
    </location>
    <ligand>
        <name>cholesterol</name>
        <dbReference type="ChEBI" id="CHEBI:16113"/>
    </ligand>
</feature>
<feature type="binding site" evidence="4 14">
    <location>
        <position position="268"/>
    </location>
    <ligand>
        <name>cholesterol</name>
        <dbReference type="ChEBI" id="CHEBI:16113"/>
    </ligand>
</feature>
<feature type="binding site" evidence="4 14">
    <location>
        <position position="657"/>
    </location>
    <ligand>
        <name>cholesterol</name>
        <dbReference type="ChEBI" id="CHEBI:16113"/>
    </ligand>
</feature>
<feature type="glycosylation site" description="N-linked (GlcNAc...) asparagine" evidence="1">
    <location>
        <position position="9"/>
    </location>
</feature>
<feature type="glycosylation site" description="N-linked (GlcNAc...) asparagine" evidence="1">
    <location>
        <position position="15"/>
    </location>
</feature>
<feature type="glycosylation site" description="N-linked (GlcNAc...) asparagine" evidence="1">
    <location>
        <position position="29"/>
    </location>
</feature>
<feature type="glycosylation site" description="N-linked (GlcNAc...) asparagine" evidence="1">
    <location>
        <position position="309"/>
    </location>
</feature>
<feature type="glycosylation site" description="N-linked (GlcNAc...) asparagine" evidence="1">
    <location>
        <position position="381"/>
    </location>
</feature>
<feature type="mutagenesis site" description="Nearly abolished cholesterol-binding." evidence="3">
    <original>FP</original>
    <variation>IA</variation>
    <location>
        <begin position="43"/>
        <end position="44"/>
    </location>
</feature>
<feature type="mutagenesis site" description="Strongly reduced cholesterol-binding." evidence="3">
    <original>F</original>
    <variation>I</variation>
    <location>
        <position position="43"/>
    </location>
</feature>
<feature type="mutagenesis site" description="Does not affect cholesterol-binding." evidence="3">
    <original>E</original>
    <variation>Q</variation>
    <location>
        <position position="48"/>
    </location>
</feature>
<feature type="mutagenesis site" description="Strongly reduced cholesterol-binding. Abolishes cholesterol-dependent mTORC1 activity." evidence="3 4">
    <original>Y</original>
    <variation>A</variation>
    <location>
        <position position="57"/>
    </location>
</feature>
<feature type="mutagenesis site" description="Reduces binding to indole-3-acetic acid." evidence="4">
    <original>N</original>
    <variation>A</variation>
    <location>
        <position position="145"/>
    </location>
</feature>
<feature type="mutagenesis site" description="Reduces binding to indole-3-acetic acid." evidence="4">
    <original>A</original>
    <variation>W</variation>
    <location>
        <position position="148"/>
    </location>
</feature>
<feature type="mutagenesis site" description="Reduces binding to indole-3-acetic acid." evidence="4">
    <original>L</original>
    <variation>W</variation>
    <location>
        <position position="177"/>
    </location>
</feature>
<feature type="mutagenesis site" description="Abolishes the effect of cholesterol depletion in mTORC1 activity. Abolishes the effect of cholesterol depletion in mTORC1 activity; when associated with R-678." evidence="4">
    <original>F</original>
    <variation>A</variation>
    <location>
        <position position="352"/>
    </location>
</feature>
<feature type="mutagenesis site" description="Abolished ability to regulate mTORC1." evidence="3">
    <original>Y</original>
    <variation>A</variation>
    <location>
        <position position="551"/>
    </location>
</feature>
<feature type="mutagenesis site" description="In 4CA, abolished ability to regulate mTORC1; when associated with A-604, A-629 and A-638." evidence="3">
    <original>C</original>
    <variation>A</variation>
    <location>
        <position position="595"/>
    </location>
</feature>
<feature type="mutagenesis site" description="In 4CA, abolished ability to regulate mTORC1; when associated with A-595, A-629 and A-638." evidence="3">
    <original>C</original>
    <variation>A</variation>
    <location>
        <position position="604"/>
    </location>
</feature>
<feature type="mutagenesis site" description="In 4CA, abolished ability to regulate mTORC1; when associated with A-595, A-604 and A-638." evidence="3">
    <original>C</original>
    <variation>A</variation>
    <location>
        <position position="629"/>
    </location>
</feature>
<feature type="mutagenesis site" description="In 4CA, abolished ability to regulate mTORC1; when associated with A-595, A-604 and A-629." evidence="3">
    <original>C</original>
    <variation>A</variation>
    <location>
        <position position="638"/>
    </location>
</feature>
<feature type="mutagenesis site" description="Abolishes the effect of cholestrol depletion in mTORC1 activity; when associated with A-352." evidence="4">
    <original>W</original>
    <variation>R</variation>
    <location>
        <position position="678"/>
    </location>
</feature>
<feature type="sequence conflict" description="In Ref. 1; BAC03609." evidence="8" ref="1">
    <original>D</original>
    <variation>G</variation>
    <location>
        <position position="33"/>
    </location>
</feature>
<feature type="sequence conflict" description="In Ref. 5; AAH28730." evidence="8" ref="5">
    <original>K</original>
    <variation>E</variation>
    <location>
        <position position="194"/>
    </location>
</feature>
<feature type="sequence conflict" description="In Ref. 1; BAB71170." evidence="8" ref="1">
    <original>L</original>
    <variation>H</variation>
    <location>
        <position position="260"/>
    </location>
</feature>
<feature type="sequence conflict" description="In Ref. 2; CAD97915." evidence="8" ref="2">
    <original>W</original>
    <variation>R</variation>
    <location>
        <position position="460"/>
    </location>
</feature>
<feature type="sequence conflict" description="In Ref. 2; CAH10683." evidence="8" ref="2">
    <original>G</original>
    <variation>A</variation>
    <location>
        <position position="517"/>
    </location>
</feature>
<feature type="sequence conflict" description="In Ref. 5; AAH28730." evidence="8" ref="5">
    <original>S</original>
    <variation>G</variation>
    <location>
        <position position="550"/>
    </location>
</feature>
<feature type="sequence conflict" description="In Ref. 2; CAD97915." evidence="8" ref="2">
    <original>C</original>
    <variation>R</variation>
    <location>
        <position position="638"/>
    </location>
</feature>
<feature type="sequence conflict" description="In Ref. 5; AAH28730." evidence="8" ref="5">
    <original>S</original>
    <variation>Y</variation>
    <location>
        <position position="674"/>
    </location>
</feature>
<feature type="sequence conflict" description="In Ref. 2; CAH10683." evidence="8" ref="2">
    <original>Q</original>
    <variation>R</variation>
    <location>
        <position position="693"/>
    </location>
</feature>
<feature type="helix" evidence="22">
    <location>
        <begin position="39"/>
        <end position="41"/>
    </location>
</feature>
<feature type="helix" evidence="22">
    <location>
        <begin position="42"/>
        <end position="61"/>
    </location>
</feature>
<feature type="helix" evidence="22">
    <location>
        <begin position="67"/>
        <end position="79"/>
    </location>
</feature>
<feature type="helix" evidence="22">
    <location>
        <begin position="81"/>
        <end position="92"/>
    </location>
</feature>
<feature type="helix" evidence="22">
    <location>
        <begin position="95"/>
        <end position="97"/>
    </location>
</feature>
<feature type="helix" evidence="22">
    <location>
        <begin position="100"/>
        <end position="124"/>
    </location>
</feature>
<feature type="turn" evidence="22">
    <location>
        <begin position="127"/>
        <end position="129"/>
    </location>
</feature>
<feature type="helix" evidence="22">
    <location>
        <begin position="130"/>
        <end position="142"/>
    </location>
</feature>
<feature type="turn" evidence="22">
    <location>
        <begin position="146"/>
        <end position="149"/>
    </location>
</feature>
<feature type="helix" evidence="22">
    <location>
        <begin position="150"/>
        <end position="158"/>
    </location>
</feature>
<feature type="turn" evidence="22">
    <location>
        <begin position="159"/>
        <end position="161"/>
    </location>
</feature>
<feature type="helix" evidence="22">
    <location>
        <begin position="163"/>
        <end position="166"/>
    </location>
</feature>
<feature type="helix" evidence="22">
    <location>
        <begin position="167"/>
        <end position="195"/>
    </location>
</feature>
<feature type="helix" evidence="22">
    <location>
        <begin position="203"/>
        <end position="215"/>
    </location>
</feature>
<feature type="helix" evidence="22">
    <location>
        <begin position="218"/>
        <end position="233"/>
    </location>
</feature>
<feature type="helix" evidence="22">
    <location>
        <begin position="239"/>
        <end position="263"/>
    </location>
</feature>
<feature type="turn" evidence="22">
    <location>
        <begin position="264"/>
        <end position="266"/>
    </location>
</feature>
<feature type="helix" evidence="22">
    <location>
        <begin position="273"/>
        <end position="287"/>
    </location>
</feature>
<feature type="helix" evidence="22">
    <location>
        <begin position="289"/>
        <end position="301"/>
    </location>
</feature>
<feature type="helix" evidence="22">
    <location>
        <begin position="307"/>
        <end position="321"/>
    </location>
</feature>
<feature type="helix" evidence="22">
    <location>
        <begin position="327"/>
        <end position="336"/>
    </location>
</feature>
<feature type="helix" evidence="22">
    <location>
        <begin position="340"/>
        <end position="366"/>
    </location>
</feature>
<feature type="helix" evidence="22">
    <location>
        <begin position="367"/>
        <end position="369"/>
    </location>
</feature>
<feature type="helix" evidence="22">
    <location>
        <begin position="372"/>
        <end position="403"/>
    </location>
</feature>
<feature type="helix" evidence="22">
    <location>
        <begin position="406"/>
        <end position="408"/>
    </location>
</feature>
<feature type="helix" evidence="22">
    <location>
        <begin position="412"/>
        <end position="432"/>
    </location>
</feature>
<feature type="turn" evidence="21">
    <location>
        <begin position="436"/>
        <end position="438"/>
    </location>
</feature>
<feature type="helix" evidence="22">
    <location>
        <begin position="440"/>
        <end position="471"/>
    </location>
</feature>
<feature type="strand" evidence="21">
    <location>
        <begin position="475"/>
        <end position="477"/>
    </location>
</feature>
<feature type="helix" evidence="20">
    <location>
        <begin position="481"/>
        <end position="502"/>
    </location>
</feature>
<feature type="strand" evidence="19">
    <location>
        <begin position="509"/>
        <end position="511"/>
    </location>
</feature>
<feature type="helix" evidence="20">
    <location>
        <begin position="512"/>
        <end position="514"/>
    </location>
</feature>
<feature type="helix" evidence="20">
    <location>
        <begin position="517"/>
        <end position="541"/>
    </location>
</feature>
<feature type="helix" evidence="22">
    <location>
        <begin position="655"/>
        <end position="679"/>
    </location>
</feature>
<feature type="helix" evidence="22">
    <location>
        <begin position="687"/>
        <end position="710"/>
    </location>
</feature>
<feature type="helix" evidence="19">
    <location>
        <begin position="715"/>
        <end position="719"/>
    </location>
</feature>
<feature type="helix" evidence="19">
    <location>
        <begin position="745"/>
        <end position="756"/>
    </location>
</feature>
<feature type="helix" evidence="19">
    <location>
        <begin position="758"/>
        <end position="766"/>
    </location>
</feature>
<feature type="strand" evidence="19">
    <location>
        <begin position="780"/>
        <end position="782"/>
    </location>
</feature>
<feature type="helix" evidence="19">
    <location>
        <begin position="783"/>
        <end position="792"/>
    </location>
</feature>
<feature type="strand" evidence="19">
    <location>
        <begin position="795"/>
        <end position="798"/>
    </location>
</feature>
<feature type="helix" evidence="19">
    <location>
        <begin position="799"/>
        <end position="811"/>
    </location>
</feature>
<feature type="strand" evidence="19">
    <location>
        <begin position="814"/>
        <end position="820"/>
    </location>
</feature>
<feature type="strand" evidence="19">
    <location>
        <begin position="826"/>
        <end position="828"/>
    </location>
</feature>
<feature type="strand" evidence="19">
    <location>
        <begin position="830"/>
        <end position="833"/>
    </location>
</feature>
<comment type="function">
    <text evidence="3 4">Cholesterol-binding protein that acts as a regulator of mTORC1 signaling pathway (PubMed:36007018). Acts as a sensor of cholesterol to signal cholesterol sufficiency to mTORC1: in presence of cholesterol, binds cholesterol, leading to disruption of the interaction between the GATOR1 and KICSTOR complexes and promotion of mTORC1 signaling (PubMed:36007018, PubMed:39358511). Upon cholesterol starvation, GPR155/LYCHOS is unable to perturb the association between GATOR1 and KICSTOR, leading to mTORC1 signaling inhibition (PubMed:36007018). Binds indole-3-acetic acid and may play a role in tryptophan metabolism (PubMed:39358511).</text>
</comment>
<comment type="subunit">
    <text evidence="3 4">Homodimer; via the transporter region and DEP domain (PubMed:39358511). Interacts with the GATOR1 complex and prevents interaction between GATOR1 and KICSTOR; this interaction is disrupted upon cholesterol starvation (PubMed:36007018).</text>
</comment>
<comment type="subcellular location">
    <subcellularLocation>
        <location evidence="3">Lysosome membrane</location>
        <topology evidence="4">Multi-pass membrane protein</topology>
    </subcellularLocation>
</comment>
<comment type="domain">
    <text evidence="4">Cholesterol binds at the interface between the PIN-like transporter region and the GPCR domain; these two regions likely coordinate to sense cholesterol and regulate mTORC1 activation.</text>
</comment>
<comment type="sequence caution" evidence="8">
    <conflict type="erroneous initiation">
        <sequence resource="EMBL-CDS" id="BAB71170"/>
    </conflict>
</comment>
<dbReference type="EMBL" id="AK056381">
    <property type="protein sequence ID" value="BAB71170.1"/>
    <property type="status" value="ALT_INIT"/>
    <property type="molecule type" value="mRNA"/>
</dbReference>
<dbReference type="EMBL" id="AK091200">
    <property type="protein sequence ID" value="BAC03609.1"/>
    <property type="molecule type" value="mRNA"/>
</dbReference>
<dbReference type="EMBL" id="AK096665">
    <property type="protein sequence ID" value="BAC04835.1"/>
    <property type="molecule type" value="mRNA"/>
</dbReference>
<dbReference type="EMBL" id="AK315125">
    <property type="protein sequence ID" value="BAG37579.1"/>
    <property type="molecule type" value="mRNA"/>
</dbReference>
<dbReference type="EMBL" id="BX537947">
    <property type="protein sequence ID" value="CAD97915.1"/>
    <property type="molecule type" value="mRNA"/>
</dbReference>
<dbReference type="EMBL" id="AL834154">
    <property type="protein sequence ID" value="CAH10683.1"/>
    <property type="molecule type" value="mRNA"/>
</dbReference>
<dbReference type="EMBL" id="AC010894">
    <property type="protein sequence ID" value="AAY14707.1"/>
    <property type="molecule type" value="Genomic_DNA"/>
</dbReference>
<dbReference type="EMBL" id="AC018470">
    <property type="protein sequence ID" value="AAY24218.1"/>
    <property type="molecule type" value="Genomic_DNA"/>
</dbReference>
<dbReference type="EMBL" id="CH471058">
    <property type="protein sequence ID" value="EAX11137.1"/>
    <property type="molecule type" value="Genomic_DNA"/>
</dbReference>
<dbReference type="EMBL" id="CH471058">
    <property type="protein sequence ID" value="EAX11138.1"/>
    <property type="molecule type" value="Genomic_DNA"/>
</dbReference>
<dbReference type="EMBL" id="CH471058">
    <property type="protein sequence ID" value="EAX11139.1"/>
    <property type="molecule type" value="Genomic_DNA"/>
</dbReference>
<dbReference type="EMBL" id="BC028730">
    <property type="protein sequence ID" value="AAH28730.1"/>
    <property type="molecule type" value="mRNA"/>
</dbReference>
<dbReference type="EMBL" id="BC035037">
    <property type="protein sequence ID" value="AAH35037.1"/>
    <property type="molecule type" value="mRNA"/>
</dbReference>
<dbReference type="EMBL" id="AY255528">
    <property type="protein sequence ID" value="AAO85040.1"/>
    <property type="molecule type" value="mRNA"/>
</dbReference>
<dbReference type="CCDS" id="CCDS2259.1"/>
<dbReference type="RefSeq" id="NP_001028217.1">
    <property type="nucleotide sequence ID" value="NM_001033045.4"/>
</dbReference>
<dbReference type="RefSeq" id="NP_001253979.1">
    <property type="nucleotide sequence ID" value="NM_001267050.2"/>
</dbReference>
<dbReference type="RefSeq" id="NP_001253980.1">
    <property type="nucleotide sequence ID" value="NM_001267051.1"/>
</dbReference>
<dbReference type="RefSeq" id="NP_689742.4">
    <property type="nucleotide sequence ID" value="NM_152529.6"/>
</dbReference>
<dbReference type="RefSeq" id="XP_016858974.1">
    <property type="nucleotide sequence ID" value="XM_017003485.3"/>
</dbReference>
<dbReference type="RefSeq" id="XP_016858975.1">
    <property type="nucleotide sequence ID" value="XM_017003486.1"/>
</dbReference>
<dbReference type="RefSeq" id="XP_016858976.1">
    <property type="nucleotide sequence ID" value="XM_017003487.2"/>
</dbReference>
<dbReference type="RefSeq" id="XP_047299488.1">
    <property type="nucleotide sequence ID" value="XM_047443532.1"/>
</dbReference>
<dbReference type="RefSeq" id="XP_054196793.1">
    <property type="nucleotide sequence ID" value="XM_054340818.1"/>
</dbReference>
<dbReference type="RefSeq" id="XP_054196794.1">
    <property type="nucleotide sequence ID" value="XM_054340819.1"/>
</dbReference>
<dbReference type="RefSeq" id="XP_054196795.1">
    <property type="nucleotide sequence ID" value="XM_054340820.1"/>
</dbReference>
<dbReference type="PDB" id="8U54">
    <property type="method" value="EM"/>
    <property type="resolution" value="2.65 A"/>
    <property type="chains" value="A/B=1-870"/>
</dbReference>
<dbReference type="PDB" id="8U56">
    <property type="method" value="EM"/>
    <property type="resolution" value="2.75 A"/>
    <property type="chains" value="A/B=1-870"/>
</dbReference>
<dbReference type="PDB" id="8U58">
    <property type="method" value="EM"/>
    <property type="resolution" value="2.45 A"/>
    <property type="chains" value="A/C=1-870"/>
</dbReference>
<dbReference type="PDB" id="8U5C">
    <property type="method" value="EM"/>
    <property type="resolution" value="2.68 A"/>
    <property type="chains" value="E/F=1-870"/>
</dbReference>
<dbReference type="PDB" id="8U5N">
    <property type="method" value="EM"/>
    <property type="resolution" value="3.00 A"/>
    <property type="chains" value="A=1-870"/>
</dbReference>
<dbReference type="PDB" id="8U5Q">
    <property type="method" value="EM"/>
    <property type="resolution" value="2.40 A"/>
    <property type="chains" value="A/C=1-870"/>
</dbReference>
<dbReference type="PDB" id="8U5V">
    <property type="method" value="EM"/>
    <property type="resolution" value="2.77 A"/>
    <property type="chains" value="A=1-870"/>
</dbReference>
<dbReference type="PDB" id="8U5X">
    <property type="method" value="EM"/>
    <property type="resolution" value="2.79 A"/>
    <property type="chains" value="A=1-870"/>
</dbReference>
<dbReference type="PDB" id="8WR3">
    <property type="method" value="EM"/>
    <property type="resolution" value="3.10 A"/>
    <property type="chains" value="A/B=1-718"/>
</dbReference>
<dbReference type="PDB" id="8Y56">
    <property type="method" value="EM"/>
    <property type="resolution" value="2.83 A"/>
    <property type="chains" value="R=21-836"/>
</dbReference>
<dbReference type="PDB" id="8Z8Z">
    <property type="method" value="EM"/>
    <property type="resolution" value="2.11 A"/>
    <property type="chains" value="A/B=1-870"/>
</dbReference>
<dbReference type="PDBsum" id="8U54"/>
<dbReference type="PDBsum" id="8U56"/>
<dbReference type="PDBsum" id="8U58"/>
<dbReference type="PDBsum" id="8U5C"/>
<dbReference type="PDBsum" id="8U5N"/>
<dbReference type="PDBsum" id="8U5Q"/>
<dbReference type="PDBsum" id="8U5V"/>
<dbReference type="PDBsum" id="8U5X"/>
<dbReference type="PDBsum" id="8WR3"/>
<dbReference type="PDBsum" id="8Y56"/>
<dbReference type="PDBsum" id="8Z8Z"/>
<dbReference type="EMDB" id="EMD-37761"/>
<dbReference type="EMDB" id="EMD-38930"/>
<dbReference type="EMDB" id="EMD-39851"/>
<dbReference type="EMDB" id="EMD-41912"/>
<dbReference type="EMDB" id="EMD-41913"/>
<dbReference type="EMDB" id="EMD-41914"/>
<dbReference type="EMDB" id="EMD-41916"/>
<dbReference type="EMDB" id="EMD-41929"/>
<dbReference type="EMDB" id="EMD-41930"/>
<dbReference type="EMDB" id="EMD-41934"/>
<dbReference type="EMDB" id="EMD-41935"/>
<dbReference type="SMR" id="Q7Z3F1"/>
<dbReference type="BioGRID" id="127389">
    <property type="interactions" value="4"/>
</dbReference>
<dbReference type="FunCoup" id="Q7Z3F1">
    <property type="interactions" value="283"/>
</dbReference>
<dbReference type="IntAct" id="Q7Z3F1">
    <property type="interactions" value="1"/>
</dbReference>
<dbReference type="STRING" id="9606.ENSP00000376335"/>
<dbReference type="TCDB" id="2.A.69.3.8">
    <property type="family name" value="the auxin efflux carrier (aec) family"/>
</dbReference>
<dbReference type="GlyCosmos" id="Q7Z3F1">
    <property type="glycosylation" value="8 sites, No reported glycans"/>
</dbReference>
<dbReference type="GlyGen" id="Q7Z3F1">
    <property type="glycosylation" value="8 sites, 2 N-linked glycans (2 sites)"/>
</dbReference>
<dbReference type="iPTMnet" id="Q7Z3F1"/>
<dbReference type="PhosphoSitePlus" id="Q7Z3F1"/>
<dbReference type="SwissPalm" id="Q7Z3F1"/>
<dbReference type="BioMuta" id="GPR155"/>
<dbReference type="DMDM" id="68052330"/>
<dbReference type="jPOST" id="Q7Z3F1"/>
<dbReference type="MassIVE" id="Q7Z3F1"/>
<dbReference type="PaxDb" id="9606-ENSP00000376335"/>
<dbReference type="PeptideAtlas" id="Q7Z3F1"/>
<dbReference type="ProteomicsDB" id="69044"/>
<dbReference type="Antibodypedia" id="50637">
    <property type="antibodies" value="154 antibodies from 13 providers"/>
</dbReference>
<dbReference type="DNASU" id="151556"/>
<dbReference type="Ensembl" id="ENST00000295500.8">
    <property type="protein sequence ID" value="ENSP00000295500.4"/>
    <property type="gene ID" value="ENSG00000163328.14"/>
</dbReference>
<dbReference type="Ensembl" id="ENST00000392551.6">
    <property type="protein sequence ID" value="ENSP00000376334.2"/>
    <property type="gene ID" value="ENSG00000163328.14"/>
</dbReference>
<dbReference type="Ensembl" id="ENST00000392552.7">
    <property type="protein sequence ID" value="ENSP00000376335.2"/>
    <property type="gene ID" value="ENSG00000163328.14"/>
</dbReference>
<dbReference type="GeneID" id="151556"/>
<dbReference type="KEGG" id="hsa:151556"/>
<dbReference type="MANE-Select" id="ENST00000392552.7">
    <property type="protein sequence ID" value="ENSP00000376335.2"/>
    <property type="RefSeq nucleotide sequence ID" value="NM_152529.7"/>
    <property type="RefSeq protein sequence ID" value="NP_689742.4"/>
</dbReference>
<dbReference type="UCSC" id="uc002uit.5">
    <property type="organism name" value="human"/>
</dbReference>
<dbReference type="AGR" id="HGNC:22951"/>
<dbReference type="CTD" id="151556"/>
<dbReference type="DisGeNET" id="151556"/>
<dbReference type="GeneCards" id="GPR155"/>
<dbReference type="HGNC" id="HGNC:22951">
    <property type="gene designation" value="GPR155"/>
</dbReference>
<dbReference type="HPA" id="ENSG00000163328">
    <property type="expression patterns" value="Tissue enhanced (choroid plexus, stomach)"/>
</dbReference>
<dbReference type="MIM" id="620855">
    <property type="type" value="gene"/>
</dbReference>
<dbReference type="neXtProt" id="NX_Q7Z3F1"/>
<dbReference type="OpenTargets" id="ENSG00000163328"/>
<dbReference type="PharmGKB" id="PA134943679"/>
<dbReference type="VEuPathDB" id="HostDB:ENSG00000163328"/>
<dbReference type="eggNOG" id="ENOG502QQ69">
    <property type="taxonomic scope" value="Eukaryota"/>
</dbReference>
<dbReference type="GeneTree" id="ENSGT00390000004153"/>
<dbReference type="HOGENOM" id="CLU_018490_0_0_1"/>
<dbReference type="InParanoid" id="Q7Z3F1"/>
<dbReference type="OMA" id="RISMCRR"/>
<dbReference type="OrthoDB" id="2133778at2759"/>
<dbReference type="PAN-GO" id="Q7Z3F1">
    <property type="GO annotations" value="0 GO annotations based on evolutionary models"/>
</dbReference>
<dbReference type="PhylomeDB" id="Q7Z3F1"/>
<dbReference type="TreeFam" id="TF324034"/>
<dbReference type="PathwayCommons" id="Q7Z3F1"/>
<dbReference type="SignaLink" id="Q7Z3F1"/>
<dbReference type="BioGRID-ORCS" id="151556">
    <property type="hits" value="13 hits in 1150 CRISPR screens"/>
</dbReference>
<dbReference type="ChiTaRS" id="GPR155">
    <property type="organism name" value="human"/>
</dbReference>
<dbReference type="GeneWiki" id="GPR155"/>
<dbReference type="GenomeRNAi" id="151556"/>
<dbReference type="Pharos" id="Q7Z3F1">
    <property type="development level" value="Tbio"/>
</dbReference>
<dbReference type="PRO" id="PR:Q7Z3F1"/>
<dbReference type="Proteomes" id="UP000005640">
    <property type="component" value="Chromosome 2"/>
</dbReference>
<dbReference type="RNAct" id="Q7Z3F1">
    <property type="molecule type" value="protein"/>
</dbReference>
<dbReference type="Bgee" id="ENSG00000163328">
    <property type="expression patterns" value="Expressed in dorsal root ganglion and 188 other cell types or tissues"/>
</dbReference>
<dbReference type="ExpressionAtlas" id="Q7Z3F1">
    <property type="expression patterns" value="baseline and differential"/>
</dbReference>
<dbReference type="GO" id="GO:0070062">
    <property type="term" value="C:extracellular exosome"/>
    <property type="evidence" value="ECO:0007005"/>
    <property type="project" value="UniProtKB"/>
</dbReference>
<dbReference type="GO" id="GO:0005765">
    <property type="term" value="C:lysosomal membrane"/>
    <property type="evidence" value="ECO:0000314"/>
    <property type="project" value="UniProtKB"/>
</dbReference>
<dbReference type="GO" id="GO:0015485">
    <property type="term" value="F:cholesterol binding"/>
    <property type="evidence" value="ECO:0000314"/>
    <property type="project" value="UniProtKB"/>
</dbReference>
<dbReference type="GO" id="GO:0034198">
    <property type="term" value="P:cellular response to amino acid starvation"/>
    <property type="evidence" value="ECO:0000314"/>
    <property type="project" value="UniProtKB"/>
</dbReference>
<dbReference type="GO" id="GO:0071397">
    <property type="term" value="P:cellular response to cholesterol"/>
    <property type="evidence" value="ECO:0000314"/>
    <property type="project" value="UniProtKB"/>
</dbReference>
<dbReference type="GO" id="GO:0050890">
    <property type="term" value="P:cognition"/>
    <property type="evidence" value="ECO:0000315"/>
    <property type="project" value="UniProtKB"/>
</dbReference>
<dbReference type="GO" id="GO:0035556">
    <property type="term" value="P:intracellular signal transduction"/>
    <property type="evidence" value="ECO:0007669"/>
    <property type="project" value="InterPro"/>
</dbReference>
<dbReference type="GO" id="GO:0030514">
    <property type="term" value="P:negative regulation of BMP signaling pathway"/>
    <property type="evidence" value="ECO:0000318"/>
    <property type="project" value="GO_Central"/>
</dbReference>
<dbReference type="GO" id="GO:1904263">
    <property type="term" value="P:positive regulation of TORC1 signaling"/>
    <property type="evidence" value="ECO:0000314"/>
    <property type="project" value="UniProtKB"/>
</dbReference>
<dbReference type="GO" id="GO:0055085">
    <property type="term" value="P:transmembrane transport"/>
    <property type="evidence" value="ECO:0007669"/>
    <property type="project" value="InterPro"/>
</dbReference>
<dbReference type="CDD" id="cd04443">
    <property type="entry name" value="DEP_GPR155"/>
    <property type="match status" value="1"/>
</dbReference>
<dbReference type="FunFam" id="1.10.10.10:FF:000697">
    <property type="entry name" value="G protein-coupled receptor 155"/>
    <property type="match status" value="1"/>
</dbReference>
<dbReference type="FunFam" id="1.20.1070.10:FF:000298">
    <property type="entry name" value="Integral membrane protein GPR155"/>
    <property type="match status" value="1"/>
</dbReference>
<dbReference type="Gene3D" id="1.20.1070.10">
    <property type="entry name" value="Rhodopsin 7-helix transmembrane proteins"/>
    <property type="match status" value="1"/>
</dbReference>
<dbReference type="Gene3D" id="1.10.10.10">
    <property type="entry name" value="Winged helix-like DNA-binding domain superfamily/Winged helix DNA-binding domain"/>
    <property type="match status" value="1"/>
</dbReference>
<dbReference type="InterPro" id="IPR000591">
    <property type="entry name" value="DEP_dom"/>
</dbReference>
<dbReference type="InterPro" id="IPR037368">
    <property type="entry name" value="GPR155_DEP"/>
</dbReference>
<dbReference type="InterPro" id="IPR004776">
    <property type="entry name" value="Mem_transp_PIN-like"/>
</dbReference>
<dbReference type="InterPro" id="IPR051832">
    <property type="entry name" value="mTOR-Rac_regulators"/>
</dbReference>
<dbReference type="InterPro" id="IPR036388">
    <property type="entry name" value="WH-like_DNA-bd_sf"/>
</dbReference>
<dbReference type="InterPro" id="IPR036390">
    <property type="entry name" value="WH_DNA-bd_sf"/>
</dbReference>
<dbReference type="PANTHER" id="PTHR22829">
    <property type="entry name" value="DEP DOMAIN PROTEIN"/>
    <property type="match status" value="1"/>
</dbReference>
<dbReference type="PANTHER" id="PTHR22829:SF5">
    <property type="entry name" value="INTEGRAL MEMBRANE PROTEIN GPR155"/>
    <property type="match status" value="1"/>
</dbReference>
<dbReference type="Pfam" id="PF00610">
    <property type="entry name" value="DEP"/>
    <property type="match status" value="1"/>
</dbReference>
<dbReference type="Pfam" id="PF03547">
    <property type="entry name" value="Mem_trans"/>
    <property type="match status" value="1"/>
</dbReference>
<dbReference type="SMART" id="SM00049">
    <property type="entry name" value="DEP"/>
    <property type="match status" value="1"/>
</dbReference>
<dbReference type="SUPFAM" id="SSF46785">
    <property type="entry name" value="Winged helix' DNA-binding domain"/>
    <property type="match status" value="1"/>
</dbReference>
<dbReference type="PROSITE" id="PS50186">
    <property type="entry name" value="DEP"/>
    <property type="match status" value="1"/>
</dbReference>
<reference key="1">
    <citation type="journal article" date="2004" name="Nat. Genet.">
        <title>Complete sequencing and characterization of 21,243 full-length human cDNAs.</title>
        <authorList>
            <person name="Ota T."/>
            <person name="Suzuki Y."/>
            <person name="Nishikawa T."/>
            <person name="Otsuki T."/>
            <person name="Sugiyama T."/>
            <person name="Irie R."/>
            <person name="Wakamatsu A."/>
            <person name="Hayashi K."/>
            <person name="Sato H."/>
            <person name="Nagai K."/>
            <person name="Kimura K."/>
            <person name="Makita H."/>
            <person name="Sekine M."/>
            <person name="Obayashi M."/>
            <person name="Nishi T."/>
            <person name="Shibahara T."/>
            <person name="Tanaka T."/>
            <person name="Ishii S."/>
            <person name="Yamamoto J."/>
            <person name="Saito K."/>
            <person name="Kawai Y."/>
            <person name="Isono Y."/>
            <person name="Nakamura Y."/>
            <person name="Nagahari K."/>
            <person name="Murakami K."/>
            <person name="Yasuda T."/>
            <person name="Iwayanagi T."/>
            <person name="Wagatsuma M."/>
            <person name="Shiratori A."/>
            <person name="Sudo H."/>
            <person name="Hosoiri T."/>
            <person name="Kaku Y."/>
            <person name="Kodaira H."/>
            <person name="Kondo H."/>
            <person name="Sugawara M."/>
            <person name="Takahashi M."/>
            <person name="Kanda K."/>
            <person name="Yokoi T."/>
            <person name="Furuya T."/>
            <person name="Kikkawa E."/>
            <person name="Omura Y."/>
            <person name="Abe K."/>
            <person name="Kamihara K."/>
            <person name="Katsuta N."/>
            <person name="Sato K."/>
            <person name="Tanikawa M."/>
            <person name="Yamazaki M."/>
            <person name="Ninomiya K."/>
            <person name="Ishibashi T."/>
            <person name="Yamashita H."/>
            <person name="Murakawa K."/>
            <person name="Fujimori K."/>
            <person name="Tanai H."/>
            <person name="Kimata M."/>
            <person name="Watanabe M."/>
            <person name="Hiraoka S."/>
            <person name="Chiba Y."/>
            <person name="Ishida S."/>
            <person name="Ono Y."/>
            <person name="Takiguchi S."/>
            <person name="Watanabe S."/>
            <person name="Yosida M."/>
            <person name="Hotuta T."/>
            <person name="Kusano J."/>
            <person name="Kanehori K."/>
            <person name="Takahashi-Fujii A."/>
            <person name="Hara H."/>
            <person name="Tanase T.-O."/>
            <person name="Nomura Y."/>
            <person name="Togiya S."/>
            <person name="Komai F."/>
            <person name="Hara R."/>
            <person name="Takeuchi K."/>
            <person name="Arita M."/>
            <person name="Imose N."/>
            <person name="Musashino K."/>
            <person name="Yuuki H."/>
            <person name="Oshima A."/>
            <person name="Sasaki N."/>
            <person name="Aotsuka S."/>
            <person name="Yoshikawa Y."/>
            <person name="Matsunawa H."/>
            <person name="Ichihara T."/>
            <person name="Shiohata N."/>
            <person name="Sano S."/>
            <person name="Moriya S."/>
            <person name="Momiyama H."/>
            <person name="Satoh N."/>
            <person name="Takami S."/>
            <person name="Terashima Y."/>
            <person name="Suzuki O."/>
            <person name="Nakagawa S."/>
            <person name="Senoh A."/>
            <person name="Mizoguchi H."/>
            <person name="Goto Y."/>
            <person name="Shimizu F."/>
            <person name="Wakebe H."/>
            <person name="Hishigaki H."/>
            <person name="Watanabe T."/>
            <person name="Sugiyama A."/>
            <person name="Takemoto M."/>
            <person name="Kawakami B."/>
            <person name="Yamazaki M."/>
            <person name="Watanabe K."/>
            <person name="Kumagai A."/>
            <person name="Itakura S."/>
            <person name="Fukuzumi Y."/>
            <person name="Fujimori Y."/>
            <person name="Komiyama M."/>
            <person name="Tashiro H."/>
            <person name="Tanigami A."/>
            <person name="Fujiwara T."/>
            <person name="Ono T."/>
            <person name="Yamada K."/>
            <person name="Fujii Y."/>
            <person name="Ozaki K."/>
            <person name="Hirao M."/>
            <person name="Ohmori Y."/>
            <person name="Kawabata A."/>
            <person name="Hikiji T."/>
            <person name="Kobatake N."/>
            <person name="Inagaki H."/>
            <person name="Ikema Y."/>
            <person name="Okamoto S."/>
            <person name="Okitani R."/>
            <person name="Kawakami T."/>
            <person name="Noguchi S."/>
            <person name="Itoh T."/>
            <person name="Shigeta K."/>
            <person name="Senba T."/>
            <person name="Matsumura K."/>
            <person name="Nakajima Y."/>
            <person name="Mizuno T."/>
            <person name="Morinaga M."/>
            <person name="Sasaki M."/>
            <person name="Togashi T."/>
            <person name="Oyama M."/>
            <person name="Hata H."/>
            <person name="Watanabe M."/>
            <person name="Komatsu T."/>
            <person name="Mizushima-Sugano J."/>
            <person name="Satoh T."/>
            <person name="Shirai Y."/>
            <person name="Takahashi Y."/>
            <person name="Nakagawa K."/>
            <person name="Okumura K."/>
            <person name="Nagase T."/>
            <person name="Nomura N."/>
            <person name="Kikuchi H."/>
            <person name="Masuho Y."/>
            <person name="Yamashita R."/>
            <person name="Nakai K."/>
            <person name="Yada T."/>
            <person name="Nakamura Y."/>
            <person name="Ohara O."/>
            <person name="Isogai T."/>
            <person name="Sugano S."/>
        </authorList>
    </citation>
    <scope>NUCLEOTIDE SEQUENCE [LARGE SCALE MRNA]</scope>
    <source>
        <tissue>Tongue</tissue>
        <tissue>Trachea</tissue>
    </source>
</reference>
<reference key="2">
    <citation type="journal article" date="2007" name="BMC Genomics">
        <title>The full-ORF clone resource of the German cDNA consortium.</title>
        <authorList>
            <person name="Bechtel S."/>
            <person name="Rosenfelder H."/>
            <person name="Duda A."/>
            <person name="Schmidt C.P."/>
            <person name="Ernst U."/>
            <person name="Wellenreuther R."/>
            <person name="Mehrle A."/>
            <person name="Schuster C."/>
            <person name="Bahr A."/>
            <person name="Bloecker H."/>
            <person name="Heubner D."/>
            <person name="Hoerlein A."/>
            <person name="Michel G."/>
            <person name="Wedler H."/>
            <person name="Koehrer K."/>
            <person name="Ottenwaelder B."/>
            <person name="Poustka A."/>
            <person name="Wiemann S."/>
            <person name="Schupp I."/>
        </authorList>
    </citation>
    <scope>NUCLEOTIDE SEQUENCE [LARGE SCALE MRNA]</scope>
    <source>
        <tissue>Amygdala</tissue>
        <tissue>Retina</tissue>
    </source>
</reference>
<reference key="3">
    <citation type="journal article" date="2005" name="Nature">
        <title>Generation and annotation of the DNA sequences of human chromosomes 2 and 4.</title>
        <authorList>
            <person name="Hillier L.W."/>
            <person name="Graves T.A."/>
            <person name="Fulton R.S."/>
            <person name="Fulton L.A."/>
            <person name="Pepin K.H."/>
            <person name="Minx P."/>
            <person name="Wagner-McPherson C."/>
            <person name="Layman D."/>
            <person name="Wylie K."/>
            <person name="Sekhon M."/>
            <person name="Becker M.C."/>
            <person name="Fewell G.A."/>
            <person name="Delehaunty K.D."/>
            <person name="Miner T.L."/>
            <person name="Nash W.E."/>
            <person name="Kremitzki C."/>
            <person name="Oddy L."/>
            <person name="Du H."/>
            <person name="Sun H."/>
            <person name="Bradshaw-Cordum H."/>
            <person name="Ali J."/>
            <person name="Carter J."/>
            <person name="Cordes M."/>
            <person name="Harris A."/>
            <person name="Isak A."/>
            <person name="van Brunt A."/>
            <person name="Nguyen C."/>
            <person name="Du F."/>
            <person name="Courtney L."/>
            <person name="Kalicki J."/>
            <person name="Ozersky P."/>
            <person name="Abbott S."/>
            <person name="Armstrong J."/>
            <person name="Belter E.A."/>
            <person name="Caruso L."/>
            <person name="Cedroni M."/>
            <person name="Cotton M."/>
            <person name="Davidson T."/>
            <person name="Desai A."/>
            <person name="Elliott G."/>
            <person name="Erb T."/>
            <person name="Fronick C."/>
            <person name="Gaige T."/>
            <person name="Haakenson W."/>
            <person name="Haglund K."/>
            <person name="Holmes A."/>
            <person name="Harkins R."/>
            <person name="Kim K."/>
            <person name="Kruchowski S.S."/>
            <person name="Strong C.M."/>
            <person name="Grewal N."/>
            <person name="Goyea E."/>
            <person name="Hou S."/>
            <person name="Levy A."/>
            <person name="Martinka S."/>
            <person name="Mead K."/>
            <person name="McLellan M.D."/>
            <person name="Meyer R."/>
            <person name="Randall-Maher J."/>
            <person name="Tomlinson C."/>
            <person name="Dauphin-Kohlberg S."/>
            <person name="Kozlowicz-Reilly A."/>
            <person name="Shah N."/>
            <person name="Swearengen-Shahid S."/>
            <person name="Snider J."/>
            <person name="Strong J.T."/>
            <person name="Thompson J."/>
            <person name="Yoakum M."/>
            <person name="Leonard S."/>
            <person name="Pearman C."/>
            <person name="Trani L."/>
            <person name="Radionenko M."/>
            <person name="Waligorski J.E."/>
            <person name="Wang C."/>
            <person name="Rock S.M."/>
            <person name="Tin-Wollam A.-M."/>
            <person name="Maupin R."/>
            <person name="Latreille P."/>
            <person name="Wendl M.C."/>
            <person name="Yang S.-P."/>
            <person name="Pohl C."/>
            <person name="Wallis J.W."/>
            <person name="Spieth J."/>
            <person name="Bieri T.A."/>
            <person name="Berkowicz N."/>
            <person name="Nelson J.O."/>
            <person name="Osborne J."/>
            <person name="Ding L."/>
            <person name="Meyer R."/>
            <person name="Sabo A."/>
            <person name="Shotland Y."/>
            <person name="Sinha P."/>
            <person name="Wohldmann P.E."/>
            <person name="Cook L.L."/>
            <person name="Hickenbotham M.T."/>
            <person name="Eldred J."/>
            <person name="Williams D."/>
            <person name="Jones T.A."/>
            <person name="She X."/>
            <person name="Ciccarelli F.D."/>
            <person name="Izaurralde E."/>
            <person name="Taylor J."/>
            <person name="Schmutz J."/>
            <person name="Myers R.M."/>
            <person name="Cox D.R."/>
            <person name="Huang X."/>
            <person name="McPherson J.D."/>
            <person name="Mardis E.R."/>
            <person name="Clifton S.W."/>
            <person name="Warren W.C."/>
            <person name="Chinwalla A.T."/>
            <person name="Eddy S.R."/>
            <person name="Marra M.A."/>
            <person name="Ovcharenko I."/>
            <person name="Furey T.S."/>
            <person name="Miller W."/>
            <person name="Eichler E.E."/>
            <person name="Bork P."/>
            <person name="Suyama M."/>
            <person name="Torrents D."/>
            <person name="Waterston R.H."/>
            <person name="Wilson R.K."/>
        </authorList>
    </citation>
    <scope>NUCLEOTIDE SEQUENCE [LARGE SCALE GENOMIC DNA]</scope>
</reference>
<reference key="4">
    <citation type="submission" date="2005-09" db="EMBL/GenBank/DDBJ databases">
        <authorList>
            <person name="Mural R.J."/>
            <person name="Istrail S."/>
            <person name="Sutton G.G."/>
            <person name="Florea L."/>
            <person name="Halpern A.L."/>
            <person name="Mobarry C.M."/>
            <person name="Lippert R."/>
            <person name="Walenz B."/>
            <person name="Shatkay H."/>
            <person name="Dew I."/>
            <person name="Miller J.R."/>
            <person name="Flanigan M.J."/>
            <person name="Edwards N.J."/>
            <person name="Bolanos R."/>
            <person name="Fasulo D."/>
            <person name="Halldorsson B.V."/>
            <person name="Hannenhalli S."/>
            <person name="Turner R."/>
            <person name="Yooseph S."/>
            <person name="Lu F."/>
            <person name="Nusskern D.R."/>
            <person name="Shue B.C."/>
            <person name="Zheng X.H."/>
            <person name="Zhong F."/>
            <person name="Delcher A.L."/>
            <person name="Huson D.H."/>
            <person name="Kravitz S.A."/>
            <person name="Mouchard L."/>
            <person name="Reinert K."/>
            <person name="Remington K.A."/>
            <person name="Clark A.G."/>
            <person name="Waterman M.S."/>
            <person name="Eichler E.E."/>
            <person name="Adams M.D."/>
            <person name="Hunkapiller M.W."/>
            <person name="Myers E.W."/>
            <person name="Venter J.C."/>
        </authorList>
    </citation>
    <scope>NUCLEOTIDE SEQUENCE [LARGE SCALE GENOMIC DNA]</scope>
</reference>
<reference key="5">
    <citation type="journal article" date="2004" name="Genome Res.">
        <title>The status, quality, and expansion of the NIH full-length cDNA project: the Mammalian Gene Collection (MGC).</title>
        <authorList>
            <consortium name="The MGC Project Team"/>
        </authorList>
    </citation>
    <scope>NUCLEOTIDE SEQUENCE [LARGE SCALE MRNA]</scope>
    <source>
        <tissue>Brain</tissue>
    </source>
</reference>
<reference key="6">
    <citation type="journal article" date="2003" name="Proc. Natl. Acad. Sci. U.S.A.">
        <title>The G protein-coupled receptor repertoires of human and mouse.</title>
        <authorList>
            <person name="Vassilatis D.K."/>
            <person name="Hohmann J.G."/>
            <person name="Zeng H."/>
            <person name="Li F."/>
            <person name="Ranchalis J.E."/>
            <person name="Mortrud M.T."/>
            <person name="Brown A."/>
            <person name="Rodriguez S.S."/>
            <person name="Weller J.R."/>
            <person name="Wright A.C."/>
            <person name="Bergmann J.E."/>
            <person name="Gaitanaris G.A."/>
        </authorList>
    </citation>
    <scope>NUCLEOTIDE SEQUENCE [LARGE SCALE MRNA] OF 533-675</scope>
</reference>
<reference key="7">
    <citation type="journal article" date="2022" name="Science">
        <title>Lysosomal GPCR-like protein LYCHOS signals cholesterol sufficiency to mTORC1.</title>
        <authorList>
            <person name="Shin H.R."/>
            <person name="Citron Y.R."/>
            <person name="Wang L."/>
            <person name="Tribouillard L."/>
            <person name="Goul C.S."/>
            <person name="Stipp R."/>
            <person name="Sugasawa Y."/>
            <person name="Jain A."/>
            <person name="Samson N."/>
            <person name="Lim C.Y."/>
            <person name="Davis O.B."/>
            <person name="Castaneda-Carpio D."/>
            <person name="Qian M."/>
            <person name="Nomura D.K."/>
            <person name="Perera R.M."/>
            <person name="Park E."/>
            <person name="Covey D.F."/>
            <person name="Laplante M."/>
            <person name="Evers A.S."/>
            <person name="Zoncu R."/>
        </authorList>
    </citation>
    <scope>FUNCTION</scope>
    <scope>SUBCELLULAR LOCATION</scope>
    <scope>CHOLESTEROL-BINDING</scope>
    <scope>INTERACTION WITH GATOR1 COMPLEX</scope>
    <scope>MUTAGENESIS OF 43-PHE-PRO-44; PHE-43; GLU-48; TYR-57; TYR-551; CYS-595; CYS-604; CYS-629 AND CYS-638</scope>
</reference>
<reference evidence="11 12 13 14 15 16 17 18" key="8">
    <citation type="journal article" date="2024" name="Nature">
        <title>LYCHOS is a human hybrid of a plant-like PIN transporter and a GPCR.</title>
        <authorList>
            <person name="Bayly-Jones C."/>
            <person name="Lupton C.J."/>
            <person name="Keen A.C."/>
            <person name="Dong S."/>
            <person name="Mastos C."/>
            <person name="Luo W."/>
            <person name="Qian C."/>
            <person name="Jones G.D."/>
            <person name="Venugopal H."/>
            <person name="Chang Y.G."/>
            <person name="Clarke R.J."/>
            <person name="Halls M.L."/>
            <person name="Ellisdon A.M."/>
        </authorList>
    </citation>
    <scope>STRUCTURE BY ELECTRON MICROSCOPY (2.40 ANGSTROMS) OF WILD-TYPE AND MUTANT ALA-352 AND ARG-678 IN COMPLEXES WITH CHOLESTEROL AND INDOLE-3-ACETIC ACID</scope>
    <scope>MUTAGENESIS OF TYR-57; ASN-145; ALA-148; LEU-177; PHE-352 AND TRP-678</scope>
</reference>